<protein>
    <recommendedName>
        <fullName evidence="1">Ribosomal RNA small subunit methyltransferase G</fullName>
        <ecNumber evidence="1">2.1.1.-</ecNumber>
    </recommendedName>
    <alternativeName>
        <fullName evidence="1">16S rRNA 7-methylguanosine methyltransferase</fullName>
        <shortName evidence="1">16S rRNA m7G methyltransferase</shortName>
    </alternativeName>
</protein>
<keyword id="KW-0963">Cytoplasm</keyword>
<keyword id="KW-0489">Methyltransferase</keyword>
<keyword id="KW-0698">rRNA processing</keyword>
<keyword id="KW-0949">S-adenosyl-L-methionine</keyword>
<keyword id="KW-0808">Transferase</keyword>
<evidence type="ECO:0000255" key="1">
    <source>
        <dbReference type="HAMAP-Rule" id="MF_00074"/>
    </source>
</evidence>
<feature type="chain" id="PRO_0000184345" description="Ribosomal RNA small subunit methyltransferase G">
    <location>
        <begin position="1"/>
        <end position="237"/>
    </location>
</feature>
<feature type="binding site" evidence="1">
    <location>
        <position position="78"/>
    </location>
    <ligand>
        <name>S-adenosyl-L-methionine</name>
        <dbReference type="ChEBI" id="CHEBI:59789"/>
    </ligand>
</feature>
<feature type="binding site" evidence="1">
    <location>
        <position position="83"/>
    </location>
    <ligand>
        <name>S-adenosyl-L-methionine</name>
        <dbReference type="ChEBI" id="CHEBI:59789"/>
    </ligand>
</feature>
<feature type="binding site" evidence="1">
    <location>
        <begin position="129"/>
        <end position="130"/>
    </location>
    <ligand>
        <name>S-adenosyl-L-methionine</name>
        <dbReference type="ChEBI" id="CHEBI:59789"/>
    </ligand>
</feature>
<feature type="binding site" evidence="1">
    <location>
        <position position="148"/>
    </location>
    <ligand>
        <name>S-adenosyl-L-methionine</name>
        <dbReference type="ChEBI" id="CHEBI:59789"/>
    </ligand>
</feature>
<organism>
    <name type="scientific">Streptococcus pyogenes serotype M6 (strain ATCC BAA-946 / MGAS10394)</name>
    <dbReference type="NCBI Taxonomy" id="286636"/>
    <lineage>
        <taxon>Bacteria</taxon>
        <taxon>Bacillati</taxon>
        <taxon>Bacillota</taxon>
        <taxon>Bacilli</taxon>
        <taxon>Lactobacillales</taxon>
        <taxon>Streptococcaceae</taxon>
        <taxon>Streptococcus</taxon>
    </lineage>
</organism>
<comment type="function">
    <text evidence="1">Specifically methylates the N7 position of a guanine in 16S rRNA.</text>
</comment>
<comment type="subcellular location">
    <subcellularLocation>
        <location evidence="1">Cytoplasm</location>
    </subcellularLocation>
</comment>
<comment type="similarity">
    <text evidence="1">Belongs to the methyltransferase superfamily. RNA methyltransferase RsmG family.</text>
</comment>
<gene>
    <name evidence="1" type="primary">rsmG</name>
    <name type="ordered locus">M6_Spy0306</name>
</gene>
<accession>Q5XDS2</accession>
<reference key="1">
    <citation type="journal article" date="2004" name="J. Infect. Dis.">
        <title>Progress toward characterization of the group A Streptococcus metagenome: complete genome sequence of a macrolide-resistant serotype M6 strain.</title>
        <authorList>
            <person name="Banks D.J."/>
            <person name="Porcella S.F."/>
            <person name="Barbian K.D."/>
            <person name="Beres S.B."/>
            <person name="Philips L.E."/>
            <person name="Voyich J.M."/>
            <person name="DeLeo F.R."/>
            <person name="Martin J.M."/>
            <person name="Somerville G.A."/>
            <person name="Musser J.M."/>
        </authorList>
    </citation>
    <scope>NUCLEOTIDE SEQUENCE [LARGE SCALE GENOMIC DNA]</scope>
    <source>
        <strain>ATCC BAA-946 / MGAS10394</strain>
    </source>
</reference>
<sequence>MTPQDFYRTLEEDGFSLSSKQKEQFDTYFKLLVEWNTKINLTAITEENEVYLKHFYDSIAPILQGFLANEPIKLLDIGAGAGFPSLPMKILFPNLEVTIIDSLNKRISFLTLLAQELGLENVHFFHGRAEDFGQDKAFRGQFDAVTARAVARMQVLSELTIPFLKIRGKLIALKAQAADQELEEAKNALCLLFGKVIKNHSYQLPNGDSRFITIVEKKKETPNKYPRKAGLPNKKPL</sequence>
<name>RSMG_STRP6</name>
<dbReference type="EC" id="2.1.1.-" evidence="1"/>
<dbReference type="EMBL" id="CP000003">
    <property type="protein sequence ID" value="AAT86441.1"/>
    <property type="molecule type" value="Genomic_DNA"/>
</dbReference>
<dbReference type="RefSeq" id="WP_011184187.1">
    <property type="nucleotide sequence ID" value="NC_006086.1"/>
</dbReference>
<dbReference type="SMR" id="Q5XDS2"/>
<dbReference type="KEGG" id="spa:M6_Spy0306"/>
<dbReference type="HOGENOM" id="CLU_065341_0_2_9"/>
<dbReference type="Proteomes" id="UP000001167">
    <property type="component" value="Chromosome"/>
</dbReference>
<dbReference type="GO" id="GO:0005829">
    <property type="term" value="C:cytosol"/>
    <property type="evidence" value="ECO:0007669"/>
    <property type="project" value="TreeGrafter"/>
</dbReference>
<dbReference type="GO" id="GO:0070043">
    <property type="term" value="F:rRNA (guanine-N7-)-methyltransferase activity"/>
    <property type="evidence" value="ECO:0007669"/>
    <property type="project" value="UniProtKB-UniRule"/>
</dbReference>
<dbReference type="CDD" id="cd02440">
    <property type="entry name" value="AdoMet_MTases"/>
    <property type="match status" value="1"/>
</dbReference>
<dbReference type="FunFam" id="3.40.50.150:FF:000041">
    <property type="entry name" value="Ribosomal RNA small subunit methyltransferase G"/>
    <property type="match status" value="1"/>
</dbReference>
<dbReference type="Gene3D" id="3.40.50.150">
    <property type="entry name" value="Vaccinia Virus protein VP39"/>
    <property type="match status" value="1"/>
</dbReference>
<dbReference type="HAMAP" id="MF_00074">
    <property type="entry name" value="16SrRNA_methyltr_G"/>
    <property type="match status" value="1"/>
</dbReference>
<dbReference type="InterPro" id="IPR003682">
    <property type="entry name" value="rRNA_ssu_MeTfrase_G"/>
</dbReference>
<dbReference type="InterPro" id="IPR029063">
    <property type="entry name" value="SAM-dependent_MTases_sf"/>
</dbReference>
<dbReference type="NCBIfam" id="TIGR00138">
    <property type="entry name" value="rsmG_gidB"/>
    <property type="match status" value="1"/>
</dbReference>
<dbReference type="PANTHER" id="PTHR31760">
    <property type="entry name" value="S-ADENOSYL-L-METHIONINE-DEPENDENT METHYLTRANSFERASES SUPERFAMILY PROTEIN"/>
    <property type="match status" value="1"/>
</dbReference>
<dbReference type="PANTHER" id="PTHR31760:SF0">
    <property type="entry name" value="S-ADENOSYL-L-METHIONINE-DEPENDENT METHYLTRANSFERASES SUPERFAMILY PROTEIN"/>
    <property type="match status" value="1"/>
</dbReference>
<dbReference type="Pfam" id="PF02527">
    <property type="entry name" value="GidB"/>
    <property type="match status" value="1"/>
</dbReference>
<dbReference type="PIRSF" id="PIRSF003078">
    <property type="entry name" value="GidB"/>
    <property type="match status" value="1"/>
</dbReference>
<dbReference type="SUPFAM" id="SSF53335">
    <property type="entry name" value="S-adenosyl-L-methionine-dependent methyltransferases"/>
    <property type="match status" value="1"/>
</dbReference>
<proteinExistence type="inferred from homology"/>